<dbReference type="EMBL" id="AB006424">
    <property type="protein sequence ID" value="BAA33116.1"/>
    <property type="molecule type" value="Genomic_DNA"/>
</dbReference>
<dbReference type="EMBL" id="AL009126">
    <property type="protein sequence ID" value="CAB12013.1"/>
    <property type="molecule type" value="Genomic_DNA"/>
</dbReference>
<dbReference type="PIR" id="A69749">
    <property type="entry name" value="A69749"/>
</dbReference>
<dbReference type="RefSeq" id="NP_388101.1">
    <property type="nucleotide sequence ID" value="NC_000964.3"/>
</dbReference>
<dbReference type="RefSeq" id="WP_003246251.1">
    <property type="nucleotide sequence ID" value="NZ_OZ025638.1"/>
</dbReference>
<dbReference type="FunCoup" id="O31446">
    <property type="interactions" value="166"/>
</dbReference>
<dbReference type="STRING" id="224308.BSU02190"/>
<dbReference type="PaxDb" id="224308-BSU02190"/>
<dbReference type="EnsemblBacteria" id="CAB12013">
    <property type="protein sequence ID" value="CAB12013"/>
    <property type="gene ID" value="BSU_02190"/>
</dbReference>
<dbReference type="GeneID" id="938441"/>
<dbReference type="KEGG" id="bsu:BSU02190"/>
<dbReference type="PATRIC" id="fig|224308.179.peg.225"/>
<dbReference type="InParanoid" id="O31446"/>
<dbReference type="OrthoDB" id="2927622at2"/>
<dbReference type="BioCyc" id="BSUB:BSU02190-MONOMER"/>
<dbReference type="Proteomes" id="UP000001570">
    <property type="component" value="Chromosome"/>
</dbReference>
<dbReference type="GO" id="GO:0005886">
    <property type="term" value="C:plasma membrane"/>
    <property type="evidence" value="ECO:0007669"/>
    <property type="project" value="UniProtKB-SubCell"/>
</dbReference>
<proteinExistence type="predicted"/>
<comment type="subcellular location">
    <subcellularLocation>
        <location evidence="2">Cell membrane</location>
        <topology evidence="2">Multi-pass membrane protein</topology>
    </subcellularLocation>
</comment>
<organism>
    <name type="scientific">Bacillus subtilis (strain 168)</name>
    <dbReference type="NCBI Taxonomy" id="224308"/>
    <lineage>
        <taxon>Bacteria</taxon>
        <taxon>Bacillati</taxon>
        <taxon>Bacillota</taxon>
        <taxon>Bacilli</taxon>
        <taxon>Bacillales</taxon>
        <taxon>Bacillaceae</taxon>
        <taxon>Bacillus</taxon>
    </lineage>
</organism>
<accession>O31446</accession>
<evidence type="ECO:0000255" key="1"/>
<evidence type="ECO:0000305" key="2"/>
<name>YBFF_BACSU</name>
<sequence length="303" mass="35310">MKNDQIVFEKTKNIAHDINQMQNQQEIIDYLFRQDSLTLNQLKHYYSEPSLPLQFLVKVAVLCMFISMTLASFLFIQAKEVFTNTILSDISPAVFSIFTVICIFMTYTKIIKKGNKNKGKASLNQRSEFYEKNKLINTILYKKYKMDQQNIQANKHTASDNEDSMNFSAVLNHVLTISKNDKELLGYLDTRDNAMLSQLKAYFSTRPFSLPHYMSLMFCGSIIVVYATSLFSGQINYIDIPHIFIFLLLIIFLKILIDLIKLLNISRKGQLHTVLHFAQRAEYLRMRGVIDFILTERYNKKIM</sequence>
<gene>
    <name type="primary">ybfF</name>
    <name type="ordered locus">BSU02190</name>
</gene>
<feature type="chain" id="PRO_0000049463" description="Uncharacterized protein YbfF">
    <location>
        <begin position="1"/>
        <end position="303"/>
    </location>
</feature>
<feature type="transmembrane region" description="Helical" evidence="1">
    <location>
        <begin position="55"/>
        <end position="77"/>
    </location>
</feature>
<feature type="transmembrane region" description="Helical" evidence="1">
    <location>
        <begin position="92"/>
        <end position="111"/>
    </location>
</feature>
<feature type="transmembrane region" description="Helical" evidence="1">
    <location>
        <begin position="208"/>
        <end position="230"/>
    </location>
</feature>
<feature type="transmembrane region" description="Helical" evidence="1">
    <location>
        <begin position="240"/>
        <end position="257"/>
    </location>
</feature>
<keyword id="KW-1003">Cell membrane</keyword>
<keyword id="KW-0472">Membrane</keyword>
<keyword id="KW-1185">Reference proteome</keyword>
<keyword id="KW-0812">Transmembrane</keyword>
<keyword id="KW-1133">Transmembrane helix</keyword>
<reference key="1">
    <citation type="submission" date="1997-07" db="EMBL/GenBank/DDBJ databases">
        <title>Sequence analysis of the 70kb region between 17 and 23 degree of the Bacillus subtilis chromosome.</title>
        <authorList>
            <person name="Haga K."/>
            <person name="Liu H."/>
            <person name="Yasumoto K."/>
            <person name="Takahashi H."/>
            <person name="Yoshikawa H."/>
        </authorList>
    </citation>
    <scope>NUCLEOTIDE SEQUENCE [GENOMIC DNA]</scope>
    <source>
        <strain>168</strain>
    </source>
</reference>
<reference key="2">
    <citation type="journal article" date="1997" name="Nature">
        <title>The complete genome sequence of the Gram-positive bacterium Bacillus subtilis.</title>
        <authorList>
            <person name="Kunst F."/>
            <person name="Ogasawara N."/>
            <person name="Moszer I."/>
            <person name="Albertini A.M."/>
            <person name="Alloni G."/>
            <person name="Azevedo V."/>
            <person name="Bertero M.G."/>
            <person name="Bessieres P."/>
            <person name="Bolotin A."/>
            <person name="Borchert S."/>
            <person name="Borriss R."/>
            <person name="Boursier L."/>
            <person name="Brans A."/>
            <person name="Braun M."/>
            <person name="Brignell S.C."/>
            <person name="Bron S."/>
            <person name="Brouillet S."/>
            <person name="Bruschi C.V."/>
            <person name="Caldwell B."/>
            <person name="Capuano V."/>
            <person name="Carter N.M."/>
            <person name="Choi S.-K."/>
            <person name="Codani J.-J."/>
            <person name="Connerton I.F."/>
            <person name="Cummings N.J."/>
            <person name="Daniel R.A."/>
            <person name="Denizot F."/>
            <person name="Devine K.M."/>
            <person name="Duesterhoeft A."/>
            <person name="Ehrlich S.D."/>
            <person name="Emmerson P.T."/>
            <person name="Entian K.-D."/>
            <person name="Errington J."/>
            <person name="Fabret C."/>
            <person name="Ferrari E."/>
            <person name="Foulger D."/>
            <person name="Fritz C."/>
            <person name="Fujita M."/>
            <person name="Fujita Y."/>
            <person name="Fuma S."/>
            <person name="Galizzi A."/>
            <person name="Galleron N."/>
            <person name="Ghim S.-Y."/>
            <person name="Glaser P."/>
            <person name="Goffeau A."/>
            <person name="Golightly E.J."/>
            <person name="Grandi G."/>
            <person name="Guiseppi G."/>
            <person name="Guy B.J."/>
            <person name="Haga K."/>
            <person name="Haiech J."/>
            <person name="Harwood C.R."/>
            <person name="Henaut A."/>
            <person name="Hilbert H."/>
            <person name="Holsappel S."/>
            <person name="Hosono S."/>
            <person name="Hullo M.-F."/>
            <person name="Itaya M."/>
            <person name="Jones L.-M."/>
            <person name="Joris B."/>
            <person name="Karamata D."/>
            <person name="Kasahara Y."/>
            <person name="Klaerr-Blanchard M."/>
            <person name="Klein C."/>
            <person name="Kobayashi Y."/>
            <person name="Koetter P."/>
            <person name="Koningstein G."/>
            <person name="Krogh S."/>
            <person name="Kumano M."/>
            <person name="Kurita K."/>
            <person name="Lapidus A."/>
            <person name="Lardinois S."/>
            <person name="Lauber J."/>
            <person name="Lazarevic V."/>
            <person name="Lee S.-M."/>
            <person name="Levine A."/>
            <person name="Liu H."/>
            <person name="Masuda S."/>
            <person name="Mauel C."/>
            <person name="Medigue C."/>
            <person name="Medina N."/>
            <person name="Mellado R.P."/>
            <person name="Mizuno M."/>
            <person name="Moestl D."/>
            <person name="Nakai S."/>
            <person name="Noback M."/>
            <person name="Noone D."/>
            <person name="O'Reilly M."/>
            <person name="Ogawa K."/>
            <person name="Ogiwara A."/>
            <person name="Oudega B."/>
            <person name="Park S.-H."/>
            <person name="Parro V."/>
            <person name="Pohl T.M."/>
            <person name="Portetelle D."/>
            <person name="Porwollik S."/>
            <person name="Prescott A.M."/>
            <person name="Presecan E."/>
            <person name="Pujic P."/>
            <person name="Purnelle B."/>
            <person name="Rapoport G."/>
            <person name="Rey M."/>
            <person name="Reynolds S."/>
            <person name="Rieger M."/>
            <person name="Rivolta C."/>
            <person name="Rocha E."/>
            <person name="Roche B."/>
            <person name="Rose M."/>
            <person name="Sadaie Y."/>
            <person name="Sato T."/>
            <person name="Scanlan E."/>
            <person name="Schleich S."/>
            <person name="Schroeter R."/>
            <person name="Scoffone F."/>
            <person name="Sekiguchi J."/>
            <person name="Sekowska A."/>
            <person name="Seror S.J."/>
            <person name="Serror P."/>
            <person name="Shin B.-S."/>
            <person name="Soldo B."/>
            <person name="Sorokin A."/>
            <person name="Tacconi E."/>
            <person name="Takagi T."/>
            <person name="Takahashi H."/>
            <person name="Takemaru K."/>
            <person name="Takeuchi M."/>
            <person name="Tamakoshi A."/>
            <person name="Tanaka T."/>
            <person name="Terpstra P."/>
            <person name="Tognoni A."/>
            <person name="Tosato V."/>
            <person name="Uchiyama S."/>
            <person name="Vandenbol M."/>
            <person name="Vannier F."/>
            <person name="Vassarotti A."/>
            <person name="Viari A."/>
            <person name="Wambutt R."/>
            <person name="Wedler E."/>
            <person name="Wedler H."/>
            <person name="Weitzenegger T."/>
            <person name="Winters P."/>
            <person name="Wipat A."/>
            <person name="Yamamoto H."/>
            <person name="Yamane K."/>
            <person name="Yasumoto K."/>
            <person name="Yata K."/>
            <person name="Yoshida K."/>
            <person name="Yoshikawa H.-F."/>
            <person name="Zumstein E."/>
            <person name="Yoshikawa H."/>
            <person name="Danchin A."/>
        </authorList>
    </citation>
    <scope>NUCLEOTIDE SEQUENCE [LARGE SCALE GENOMIC DNA]</scope>
    <source>
        <strain>168</strain>
    </source>
</reference>
<protein>
    <recommendedName>
        <fullName>Uncharacterized protein YbfF</fullName>
    </recommendedName>
</protein>